<sequence length="515" mass="58718">MMQVLLVTICLAVFPYQGSSIILESGNVNDYEVVYPQKVTALPKGAVQQAEQKYEDAMQYEFEVNGQPVVLHLEKNKDLFSEDYSETHYSPDGKEITTNPPIEDHCYYHGRIQNDAHSTASISACNGLKGHFKLRGETYLIEPLKIPDSEAHAVYKYENIEKEDDAPKMCGVTQTNWESDEPIKEASQLVATSDQQRYYDHFRYIKYFIVVDHRMVEKYNGNLRTIRRRIYQLVNILNEIYLPWNIRAPLVGIEFWNQRDLINVTSSAPYTLDLFGKWRASDLLNRKIHDYTHLLTAIVFVEQILGMAHIATMCHSELSVGLVQDYMPSEHVVAAIMVHEMGHNLGISHDEKYCNCGADSCIMYPQISIPPPVYFSNCSWEQYQNFLTIYKPDCTLIRPSRTDIVSPPVCGNDILEQGEECDCGSPEKCQDPCCDAASCKLHSWIECEFGECCDQCRFKPAGTECRGIRSECDLPEYCTGQSVDCPIDHFHRNGKPCLNNNGAEKGEFQHTGGRY</sequence>
<protein>
    <recommendedName>
        <fullName>Zinc metalloproteinase-disintegrin BA-5A</fullName>
        <ecNumber>3.4.24.-</ecNumber>
    </recommendedName>
    <alternativeName>
        <fullName>Snake venom metalloproteinase</fullName>
        <shortName>SVMP</shortName>
    </alternativeName>
</protein>
<reference key="1">
    <citation type="journal article" date="2006" name="J. Mol. Evol.">
        <title>Molecular cloning of disintegrin-like transcript BA-5A from a Bitis arietans venom gland cDNA library: a putative intermediate in the evolution of the long-chain disintegrin bitistatin.</title>
        <authorList>
            <person name="Juarez P."/>
            <person name="Wagstaff S.C."/>
            <person name="Oliver J."/>
            <person name="Sanz L."/>
            <person name="Harrison R.A."/>
            <person name="Calvete J.J."/>
        </authorList>
    </citation>
    <scope>NUCLEOTIDE SEQUENCE [MRNA]</scope>
    <source>
        <tissue>Venom gland</tissue>
    </source>
</reference>
<keyword id="KW-1217">Cell adhesion impairing toxin</keyword>
<keyword id="KW-1015">Disulfide bond</keyword>
<keyword id="KW-0325">Glycoprotein</keyword>
<keyword id="KW-1200">Hemorrhagic toxin</keyword>
<keyword id="KW-1199">Hemostasis impairing toxin</keyword>
<keyword id="KW-0378">Hydrolase</keyword>
<keyword id="KW-0479">Metal-binding</keyword>
<keyword id="KW-0482">Metalloprotease</keyword>
<keyword id="KW-0645">Protease</keyword>
<keyword id="KW-0964">Secreted</keyword>
<keyword id="KW-0732">Signal</keyword>
<keyword id="KW-0800">Toxin</keyword>
<keyword id="KW-0862">Zinc</keyword>
<keyword id="KW-0865">Zymogen</keyword>
<comment type="function">
    <text evidence="1">Snake venom zinc metalloprotease that possesses hemorrhagic activity and degrades alpha chain of fibrinogen (FGA) (By similarity). May inhibit alpha-2/beta-1 integrin (ITGA2/ITGB1).</text>
</comment>
<comment type="cofactor">
    <cofactor evidence="1">
        <name>Zn(2+)</name>
        <dbReference type="ChEBI" id="CHEBI:29105"/>
    </cofactor>
    <text evidence="1">Binds 1 zinc ion per subunit.</text>
</comment>
<comment type="subunit">
    <text evidence="1">Monomer.</text>
</comment>
<comment type="subcellular location">
    <subcellularLocation>
        <location evidence="1">Secreted</location>
    </subcellularLocation>
</comment>
<comment type="tissue specificity">
    <text>Expressed by the venom gland.</text>
</comment>
<comment type="miscellaneous">
    <text>The disintegrin domain belongs to the long disintegrin subfamily.</text>
</comment>
<comment type="similarity">
    <text evidence="6">Belongs to the venom metalloproteinase (M12B) family. P-II subfamily.</text>
</comment>
<comment type="caution">
    <text evidence="7">Contains the typical disintegrin-like domain of the P-III subfamily, but lacks the cysteine-rich domain like in P-II subfamily. This protein may represent an intermediate in the evolutionary pathway along the structural diversification pathway of disintegrin (PubMed:16786436).</text>
</comment>
<comment type="caution">
    <text evidence="7">This protein has not been detected in the venom.</text>
</comment>
<proteinExistence type="evidence at transcript level"/>
<organism>
    <name type="scientific">Bitis arietans</name>
    <name type="common">African puff adder</name>
    <dbReference type="NCBI Taxonomy" id="8692"/>
    <lineage>
        <taxon>Eukaryota</taxon>
        <taxon>Metazoa</taxon>
        <taxon>Chordata</taxon>
        <taxon>Craniata</taxon>
        <taxon>Vertebrata</taxon>
        <taxon>Euteleostomi</taxon>
        <taxon>Lepidosauria</taxon>
        <taxon>Squamata</taxon>
        <taxon>Bifurcata</taxon>
        <taxon>Unidentata</taxon>
        <taxon>Episquamata</taxon>
        <taxon>Toxicofera</taxon>
        <taxon>Serpentes</taxon>
        <taxon>Colubroidea</taxon>
        <taxon>Viperidae</taxon>
        <taxon>Viperinae</taxon>
        <taxon>Bitis</taxon>
    </lineage>
</organism>
<evidence type="ECO:0000250" key="1"/>
<evidence type="ECO:0000250" key="2">
    <source>
        <dbReference type="UniProtKB" id="Q0NZX5"/>
    </source>
</evidence>
<evidence type="ECO:0000255" key="3"/>
<evidence type="ECO:0000255" key="4">
    <source>
        <dbReference type="PROSITE-ProRule" id="PRU00068"/>
    </source>
</evidence>
<evidence type="ECO:0000255" key="5">
    <source>
        <dbReference type="PROSITE-ProRule" id="PRU00276"/>
    </source>
</evidence>
<evidence type="ECO:0000305" key="6"/>
<evidence type="ECO:0000305" key="7">
    <source>
    </source>
</evidence>
<name>VM25A_BITAR</name>
<accession>P0DM97</accession>
<feature type="signal peptide" evidence="3">
    <location>
        <begin position="1"/>
        <end position="20"/>
    </location>
</feature>
<feature type="propeptide" id="PRO_0000424725" evidence="1">
    <location>
        <begin position="21"/>
        <end position="193"/>
    </location>
</feature>
<feature type="chain" id="PRO_0000424726" description="Zinc metalloproteinase-disintegrin BA-5A">
    <location>
        <begin position="194"/>
        <end position="515"/>
    </location>
</feature>
<feature type="domain" description="Peptidase M12B" evidence="5">
    <location>
        <begin position="203"/>
        <end position="399"/>
    </location>
</feature>
<feature type="domain" description="Disintegrin" evidence="4">
    <location>
        <begin position="407"/>
        <end position="493"/>
    </location>
</feature>
<feature type="short sequence motif" description="D/ECD-tripeptide">
    <location>
        <begin position="471"/>
        <end position="473"/>
    </location>
</feature>
<feature type="active site" evidence="5">
    <location>
        <position position="340"/>
    </location>
</feature>
<feature type="binding site" evidence="5">
    <location>
        <position position="339"/>
    </location>
    <ligand>
        <name>Zn(2+)</name>
        <dbReference type="ChEBI" id="CHEBI:29105"/>
        <note>catalytic</note>
    </ligand>
</feature>
<feature type="binding site" evidence="5">
    <location>
        <position position="343"/>
    </location>
    <ligand>
        <name>Zn(2+)</name>
        <dbReference type="ChEBI" id="CHEBI:29105"/>
        <note>catalytic</note>
    </ligand>
</feature>
<feature type="binding site" evidence="5">
    <location>
        <position position="349"/>
    </location>
    <ligand>
        <name>Zn(2+)</name>
        <dbReference type="ChEBI" id="CHEBI:29105"/>
        <note>catalytic</note>
    </ligand>
</feature>
<feature type="glycosylation site" description="N-linked (GlcNAc...) asparagine" evidence="3">
    <location>
        <position position="263"/>
    </location>
</feature>
<feature type="glycosylation site" description="N-linked (GlcNAc...) asparagine" evidence="3">
    <location>
        <position position="377"/>
    </location>
</feature>
<feature type="disulfide bond" evidence="5">
    <location>
        <begin position="314"/>
        <end position="394"/>
    </location>
</feature>
<feature type="disulfide bond" evidence="5">
    <location>
        <begin position="354"/>
        <end position="378"/>
    </location>
</feature>
<feature type="disulfide bond" evidence="5">
    <location>
        <begin position="356"/>
        <end position="361"/>
    </location>
</feature>
<feature type="disulfide bond" evidence="6">
    <location>
        <begin position="410"/>
        <end position="429"/>
    </location>
</feature>
<feature type="disulfide bond" evidence="2">
    <location>
        <begin position="421"/>
        <end position="439"/>
    </location>
</feature>
<feature type="disulfide bond" evidence="2">
    <location>
        <begin position="423"/>
        <end position="434"/>
    </location>
</feature>
<feature type="disulfide bond" evidence="2">
    <location>
        <begin position="433"/>
        <end position="456"/>
    </location>
</feature>
<feature type="disulfide bond" evidence="2">
    <location>
        <begin position="447"/>
        <end position="453"/>
    </location>
</feature>
<feature type="disulfide bond" evidence="2">
    <location>
        <begin position="452"/>
        <end position="478"/>
    </location>
</feature>
<feature type="disulfide bond" evidence="2 4">
    <location>
        <begin position="465"/>
        <end position="485"/>
    </location>
</feature>
<feature type="disulfide bond" evidence="6">
    <location>
        <begin position="472"/>
        <end position="497"/>
    </location>
</feature>
<dbReference type="EC" id="3.4.24.-"/>
<dbReference type="SMR" id="P0DM97"/>
<dbReference type="GO" id="GO:0005576">
    <property type="term" value="C:extracellular region"/>
    <property type="evidence" value="ECO:0007669"/>
    <property type="project" value="UniProtKB-SubCell"/>
</dbReference>
<dbReference type="GO" id="GO:0005886">
    <property type="term" value="C:plasma membrane"/>
    <property type="evidence" value="ECO:0007669"/>
    <property type="project" value="TreeGrafter"/>
</dbReference>
<dbReference type="GO" id="GO:0046872">
    <property type="term" value="F:metal ion binding"/>
    <property type="evidence" value="ECO:0007669"/>
    <property type="project" value="UniProtKB-KW"/>
</dbReference>
<dbReference type="GO" id="GO:0004222">
    <property type="term" value="F:metalloendopeptidase activity"/>
    <property type="evidence" value="ECO:0007669"/>
    <property type="project" value="InterPro"/>
</dbReference>
<dbReference type="GO" id="GO:0090729">
    <property type="term" value="F:toxin activity"/>
    <property type="evidence" value="ECO:0007669"/>
    <property type="project" value="UniProtKB-KW"/>
</dbReference>
<dbReference type="GO" id="GO:0006508">
    <property type="term" value="P:proteolysis"/>
    <property type="evidence" value="ECO:0007669"/>
    <property type="project" value="UniProtKB-KW"/>
</dbReference>
<dbReference type="CDD" id="cd04269">
    <property type="entry name" value="ZnMc_adamalysin_II_like"/>
    <property type="match status" value="1"/>
</dbReference>
<dbReference type="FunFam" id="3.40.390.10:FF:000002">
    <property type="entry name" value="Disintegrin and metalloproteinase domain-containing protein 22"/>
    <property type="match status" value="1"/>
</dbReference>
<dbReference type="FunFam" id="4.10.70.10:FF:000001">
    <property type="entry name" value="Disintegrin and metalloproteinase domain-containing protein 22"/>
    <property type="match status" value="1"/>
</dbReference>
<dbReference type="Gene3D" id="3.40.390.10">
    <property type="entry name" value="Collagenase (Catalytic Domain)"/>
    <property type="match status" value="1"/>
</dbReference>
<dbReference type="Gene3D" id="4.10.70.10">
    <property type="entry name" value="Disintegrin domain"/>
    <property type="match status" value="1"/>
</dbReference>
<dbReference type="InterPro" id="IPR018358">
    <property type="entry name" value="Disintegrin_CS"/>
</dbReference>
<dbReference type="InterPro" id="IPR001762">
    <property type="entry name" value="Disintegrin_dom"/>
</dbReference>
<dbReference type="InterPro" id="IPR036436">
    <property type="entry name" value="Disintegrin_dom_sf"/>
</dbReference>
<dbReference type="InterPro" id="IPR024079">
    <property type="entry name" value="MetalloPept_cat_dom_sf"/>
</dbReference>
<dbReference type="InterPro" id="IPR001590">
    <property type="entry name" value="Peptidase_M12B"/>
</dbReference>
<dbReference type="InterPro" id="IPR002870">
    <property type="entry name" value="Peptidase_M12B_N"/>
</dbReference>
<dbReference type="InterPro" id="IPR034027">
    <property type="entry name" value="Reprolysin_adamalysin"/>
</dbReference>
<dbReference type="PANTHER" id="PTHR11905">
    <property type="entry name" value="ADAM A DISINTEGRIN AND METALLOPROTEASE DOMAIN"/>
    <property type="match status" value="1"/>
</dbReference>
<dbReference type="PANTHER" id="PTHR11905:SF32">
    <property type="entry name" value="DISINTEGRIN AND METALLOPROTEINASE DOMAIN-CONTAINING PROTEIN 28"/>
    <property type="match status" value="1"/>
</dbReference>
<dbReference type="Pfam" id="PF00200">
    <property type="entry name" value="Disintegrin"/>
    <property type="match status" value="1"/>
</dbReference>
<dbReference type="Pfam" id="PF01562">
    <property type="entry name" value="Pep_M12B_propep"/>
    <property type="match status" value="1"/>
</dbReference>
<dbReference type="Pfam" id="PF01421">
    <property type="entry name" value="Reprolysin"/>
    <property type="match status" value="1"/>
</dbReference>
<dbReference type="PRINTS" id="PR00289">
    <property type="entry name" value="DISINTEGRIN"/>
</dbReference>
<dbReference type="SMART" id="SM00050">
    <property type="entry name" value="DISIN"/>
    <property type="match status" value="1"/>
</dbReference>
<dbReference type="SUPFAM" id="SSF57552">
    <property type="entry name" value="Blood coagulation inhibitor (disintegrin)"/>
    <property type="match status" value="1"/>
</dbReference>
<dbReference type="SUPFAM" id="SSF55486">
    <property type="entry name" value="Metalloproteases ('zincins'), catalytic domain"/>
    <property type="match status" value="1"/>
</dbReference>
<dbReference type="PROSITE" id="PS50215">
    <property type="entry name" value="ADAM_MEPRO"/>
    <property type="match status" value="1"/>
</dbReference>
<dbReference type="PROSITE" id="PS00427">
    <property type="entry name" value="DISINTEGRIN_1"/>
    <property type="match status" value="1"/>
</dbReference>
<dbReference type="PROSITE" id="PS50214">
    <property type="entry name" value="DISINTEGRIN_2"/>
    <property type="match status" value="1"/>
</dbReference>
<dbReference type="PROSITE" id="PS00142">
    <property type="entry name" value="ZINC_PROTEASE"/>
    <property type="match status" value="1"/>
</dbReference>